<reference key="1">
    <citation type="submission" date="2009-01" db="EMBL/GenBank/DDBJ databases">
        <title>Complete sequence of Anaeromyxobacter dehalogenans 2CP-1.</title>
        <authorList>
            <person name="Lucas S."/>
            <person name="Copeland A."/>
            <person name="Lapidus A."/>
            <person name="Glavina del Rio T."/>
            <person name="Dalin E."/>
            <person name="Tice H."/>
            <person name="Bruce D."/>
            <person name="Goodwin L."/>
            <person name="Pitluck S."/>
            <person name="Saunders E."/>
            <person name="Brettin T."/>
            <person name="Detter J.C."/>
            <person name="Han C."/>
            <person name="Larimer F."/>
            <person name="Land M."/>
            <person name="Hauser L."/>
            <person name="Kyrpides N."/>
            <person name="Ovchinnikova G."/>
            <person name="Beliaev A.S."/>
            <person name="Richardson P."/>
        </authorList>
    </citation>
    <scope>NUCLEOTIDE SEQUENCE [LARGE SCALE GENOMIC DNA]</scope>
    <source>
        <strain>2CP-1 / ATCC BAA-258</strain>
    </source>
</reference>
<evidence type="ECO:0000255" key="1">
    <source>
        <dbReference type="HAMAP-Rule" id="MF_00514"/>
    </source>
</evidence>
<evidence type="ECO:0000256" key="2">
    <source>
        <dbReference type="SAM" id="MobiDB-lite"/>
    </source>
</evidence>
<evidence type="ECO:0000305" key="3"/>
<proteinExistence type="inferred from homology"/>
<keyword id="KW-0687">Ribonucleoprotein</keyword>
<keyword id="KW-0689">Ribosomal protein</keyword>
<gene>
    <name evidence="1" type="primary">rpmI</name>
    <name type="ordered locus">A2cp1_1989</name>
</gene>
<accession>B8J831</accession>
<comment type="similarity">
    <text evidence="1">Belongs to the bacterial ribosomal protein bL35 family.</text>
</comment>
<dbReference type="EMBL" id="CP001359">
    <property type="protein sequence ID" value="ACL65330.1"/>
    <property type="molecule type" value="Genomic_DNA"/>
</dbReference>
<dbReference type="RefSeq" id="WP_012525946.1">
    <property type="nucleotide sequence ID" value="NC_011891.1"/>
</dbReference>
<dbReference type="SMR" id="B8J831"/>
<dbReference type="KEGG" id="acp:A2cp1_1989"/>
<dbReference type="HOGENOM" id="CLU_169643_2_1_7"/>
<dbReference type="Proteomes" id="UP000007089">
    <property type="component" value="Chromosome"/>
</dbReference>
<dbReference type="GO" id="GO:0022625">
    <property type="term" value="C:cytosolic large ribosomal subunit"/>
    <property type="evidence" value="ECO:0007669"/>
    <property type="project" value="TreeGrafter"/>
</dbReference>
<dbReference type="GO" id="GO:0003735">
    <property type="term" value="F:structural constituent of ribosome"/>
    <property type="evidence" value="ECO:0007669"/>
    <property type="project" value="InterPro"/>
</dbReference>
<dbReference type="GO" id="GO:0006412">
    <property type="term" value="P:translation"/>
    <property type="evidence" value="ECO:0007669"/>
    <property type="project" value="UniProtKB-UniRule"/>
</dbReference>
<dbReference type="FunFam" id="4.10.410.60:FF:000001">
    <property type="entry name" value="50S ribosomal protein L35"/>
    <property type="match status" value="1"/>
</dbReference>
<dbReference type="Gene3D" id="4.10.410.60">
    <property type="match status" value="1"/>
</dbReference>
<dbReference type="HAMAP" id="MF_00514">
    <property type="entry name" value="Ribosomal_bL35"/>
    <property type="match status" value="1"/>
</dbReference>
<dbReference type="InterPro" id="IPR001706">
    <property type="entry name" value="Ribosomal_bL35"/>
</dbReference>
<dbReference type="InterPro" id="IPR021137">
    <property type="entry name" value="Ribosomal_bL35-like"/>
</dbReference>
<dbReference type="InterPro" id="IPR018265">
    <property type="entry name" value="Ribosomal_bL35_CS"/>
</dbReference>
<dbReference type="InterPro" id="IPR037229">
    <property type="entry name" value="Ribosomal_bL35_sf"/>
</dbReference>
<dbReference type="NCBIfam" id="TIGR00001">
    <property type="entry name" value="rpmI_bact"/>
    <property type="match status" value="1"/>
</dbReference>
<dbReference type="PANTHER" id="PTHR33343">
    <property type="entry name" value="54S RIBOSOMAL PROTEIN BL35M"/>
    <property type="match status" value="1"/>
</dbReference>
<dbReference type="PANTHER" id="PTHR33343:SF1">
    <property type="entry name" value="LARGE RIBOSOMAL SUBUNIT PROTEIN BL35M"/>
    <property type="match status" value="1"/>
</dbReference>
<dbReference type="Pfam" id="PF01632">
    <property type="entry name" value="Ribosomal_L35p"/>
    <property type="match status" value="1"/>
</dbReference>
<dbReference type="PRINTS" id="PR00064">
    <property type="entry name" value="RIBOSOMALL35"/>
</dbReference>
<dbReference type="SUPFAM" id="SSF143034">
    <property type="entry name" value="L35p-like"/>
    <property type="match status" value="1"/>
</dbReference>
<dbReference type="PROSITE" id="PS00936">
    <property type="entry name" value="RIBOSOMAL_L35"/>
    <property type="match status" value="1"/>
</dbReference>
<organism>
    <name type="scientific">Anaeromyxobacter dehalogenans (strain 2CP-1 / ATCC BAA-258)</name>
    <dbReference type="NCBI Taxonomy" id="455488"/>
    <lineage>
        <taxon>Bacteria</taxon>
        <taxon>Pseudomonadati</taxon>
        <taxon>Myxococcota</taxon>
        <taxon>Myxococcia</taxon>
        <taxon>Myxococcales</taxon>
        <taxon>Cystobacterineae</taxon>
        <taxon>Anaeromyxobacteraceae</taxon>
        <taxon>Anaeromyxobacter</taxon>
    </lineage>
</organism>
<feature type="chain" id="PRO_1000146114" description="Large ribosomal subunit protein bL35">
    <location>
        <begin position="1"/>
        <end position="67"/>
    </location>
</feature>
<feature type="region of interest" description="Disordered" evidence="2">
    <location>
        <begin position="1"/>
        <end position="20"/>
    </location>
</feature>
<name>RL35_ANAD2</name>
<sequence>MPKLKTKSGAKKRFVPKKSGKVKFRRAGVRHLATFGKTKKQKRHLRGTDHLTPMDEKKIKECFPYAR</sequence>
<protein>
    <recommendedName>
        <fullName evidence="1">Large ribosomal subunit protein bL35</fullName>
    </recommendedName>
    <alternativeName>
        <fullName evidence="3">50S ribosomal protein L35</fullName>
    </alternativeName>
</protein>